<feature type="chain" id="PRO_0000380946" description="8-amino-7-oxononanoate synthase">
    <location>
        <begin position="1"/>
        <end position="403"/>
    </location>
</feature>
<feature type="binding site" evidence="1">
    <location>
        <position position="30"/>
    </location>
    <ligand>
        <name>substrate</name>
    </ligand>
</feature>
<feature type="binding site" evidence="1">
    <location>
        <begin position="121"/>
        <end position="122"/>
    </location>
    <ligand>
        <name>pyridoxal 5'-phosphate</name>
        <dbReference type="ChEBI" id="CHEBI:597326"/>
    </ligand>
</feature>
<feature type="binding site" evidence="1">
    <location>
        <position position="146"/>
    </location>
    <ligand>
        <name>substrate</name>
    </ligand>
</feature>
<feature type="binding site" evidence="1">
    <location>
        <position position="192"/>
    </location>
    <ligand>
        <name>pyridoxal 5'-phosphate</name>
        <dbReference type="ChEBI" id="CHEBI:597326"/>
    </ligand>
</feature>
<feature type="binding site" evidence="1">
    <location>
        <position position="220"/>
    </location>
    <ligand>
        <name>pyridoxal 5'-phosphate</name>
        <dbReference type="ChEBI" id="CHEBI:597326"/>
    </ligand>
</feature>
<feature type="binding site" evidence="1">
    <location>
        <position position="248"/>
    </location>
    <ligand>
        <name>pyridoxal 5'-phosphate</name>
        <dbReference type="ChEBI" id="CHEBI:597326"/>
    </ligand>
</feature>
<feature type="binding site" evidence="1">
    <location>
        <position position="367"/>
    </location>
    <ligand>
        <name>substrate</name>
    </ligand>
</feature>
<feature type="modified residue" description="N6-(pyridoxal phosphate)lysine" evidence="1">
    <location>
        <position position="251"/>
    </location>
</feature>
<accession>A4JIB5</accession>
<reference key="1">
    <citation type="submission" date="2007-03" db="EMBL/GenBank/DDBJ databases">
        <title>Complete sequence of chromosome 1 of Burkholderia vietnamiensis G4.</title>
        <authorList>
            <consortium name="US DOE Joint Genome Institute"/>
            <person name="Copeland A."/>
            <person name="Lucas S."/>
            <person name="Lapidus A."/>
            <person name="Barry K."/>
            <person name="Detter J.C."/>
            <person name="Glavina del Rio T."/>
            <person name="Hammon N."/>
            <person name="Israni S."/>
            <person name="Dalin E."/>
            <person name="Tice H."/>
            <person name="Pitluck S."/>
            <person name="Chain P."/>
            <person name="Malfatti S."/>
            <person name="Shin M."/>
            <person name="Vergez L."/>
            <person name="Schmutz J."/>
            <person name="Larimer F."/>
            <person name="Land M."/>
            <person name="Hauser L."/>
            <person name="Kyrpides N."/>
            <person name="Tiedje J."/>
            <person name="Richardson P."/>
        </authorList>
    </citation>
    <scope>NUCLEOTIDE SEQUENCE [LARGE SCALE GENOMIC DNA]</scope>
    <source>
        <strain>G4 / LMG 22486</strain>
    </source>
</reference>
<dbReference type="EC" id="2.3.1.47" evidence="1"/>
<dbReference type="EMBL" id="CP000614">
    <property type="protein sequence ID" value="ABO56018.1"/>
    <property type="molecule type" value="Genomic_DNA"/>
</dbReference>
<dbReference type="SMR" id="A4JIB5"/>
<dbReference type="KEGG" id="bvi:Bcep1808_3027"/>
<dbReference type="eggNOG" id="COG0156">
    <property type="taxonomic scope" value="Bacteria"/>
</dbReference>
<dbReference type="HOGENOM" id="CLU_015846_11_2_4"/>
<dbReference type="UniPathway" id="UPA00078"/>
<dbReference type="Proteomes" id="UP000002287">
    <property type="component" value="Chromosome 1"/>
</dbReference>
<dbReference type="GO" id="GO:0008710">
    <property type="term" value="F:8-amino-7-oxononanoate synthase activity"/>
    <property type="evidence" value="ECO:0007669"/>
    <property type="project" value="UniProtKB-UniRule"/>
</dbReference>
<dbReference type="GO" id="GO:0030170">
    <property type="term" value="F:pyridoxal phosphate binding"/>
    <property type="evidence" value="ECO:0007669"/>
    <property type="project" value="UniProtKB-UniRule"/>
</dbReference>
<dbReference type="GO" id="GO:0009102">
    <property type="term" value="P:biotin biosynthetic process"/>
    <property type="evidence" value="ECO:0007669"/>
    <property type="project" value="UniProtKB-UniRule"/>
</dbReference>
<dbReference type="Gene3D" id="3.90.1150.10">
    <property type="entry name" value="Aspartate Aminotransferase, domain 1"/>
    <property type="match status" value="1"/>
</dbReference>
<dbReference type="Gene3D" id="3.40.640.10">
    <property type="entry name" value="Type I PLP-dependent aspartate aminotransferase-like (Major domain)"/>
    <property type="match status" value="1"/>
</dbReference>
<dbReference type="HAMAP" id="MF_01693">
    <property type="entry name" value="BioF_aminotrans_2"/>
    <property type="match status" value="1"/>
</dbReference>
<dbReference type="InterPro" id="IPR004839">
    <property type="entry name" value="Aminotransferase_I/II_large"/>
</dbReference>
<dbReference type="InterPro" id="IPR050087">
    <property type="entry name" value="AON_synthase_class-II"/>
</dbReference>
<dbReference type="InterPro" id="IPR004723">
    <property type="entry name" value="AONS_Archaea/Proteobacteria"/>
</dbReference>
<dbReference type="InterPro" id="IPR022834">
    <property type="entry name" value="AONS_Proteobacteria"/>
</dbReference>
<dbReference type="InterPro" id="IPR015424">
    <property type="entry name" value="PyrdxlP-dep_Trfase"/>
</dbReference>
<dbReference type="InterPro" id="IPR015421">
    <property type="entry name" value="PyrdxlP-dep_Trfase_major"/>
</dbReference>
<dbReference type="InterPro" id="IPR015422">
    <property type="entry name" value="PyrdxlP-dep_Trfase_small"/>
</dbReference>
<dbReference type="NCBIfam" id="TIGR00858">
    <property type="entry name" value="bioF"/>
    <property type="match status" value="1"/>
</dbReference>
<dbReference type="PANTHER" id="PTHR13693:SF100">
    <property type="entry name" value="8-AMINO-7-OXONONANOATE SYNTHASE"/>
    <property type="match status" value="1"/>
</dbReference>
<dbReference type="PANTHER" id="PTHR13693">
    <property type="entry name" value="CLASS II AMINOTRANSFERASE/8-AMINO-7-OXONONANOATE SYNTHASE"/>
    <property type="match status" value="1"/>
</dbReference>
<dbReference type="Pfam" id="PF00155">
    <property type="entry name" value="Aminotran_1_2"/>
    <property type="match status" value="1"/>
</dbReference>
<dbReference type="SUPFAM" id="SSF53383">
    <property type="entry name" value="PLP-dependent transferases"/>
    <property type="match status" value="1"/>
</dbReference>
<organism>
    <name type="scientific">Burkholderia vietnamiensis (strain G4 / LMG 22486)</name>
    <name type="common">Burkholderia cepacia (strain R1808)</name>
    <dbReference type="NCBI Taxonomy" id="269482"/>
    <lineage>
        <taxon>Bacteria</taxon>
        <taxon>Pseudomonadati</taxon>
        <taxon>Pseudomonadota</taxon>
        <taxon>Betaproteobacteria</taxon>
        <taxon>Burkholderiales</taxon>
        <taxon>Burkholderiaceae</taxon>
        <taxon>Burkholderia</taxon>
        <taxon>Burkholderia cepacia complex</taxon>
    </lineage>
</organism>
<gene>
    <name evidence="1" type="primary">bioF</name>
    <name type="ordered locus">Bcep1808_3027</name>
</gene>
<comment type="function">
    <text evidence="1">Catalyzes the decarboxylative condensation of pimeloyl-[acyl-carrier protein] and L-alanine to produce 8-amino-7-oxononanoate (AON), [acyl-carrier protein], and carbon dioxide.</text>
</comment>
<comment type="catalytic activity">
    <reaction evidence="1">
        <text>6-carboxyhexanoyl-[ACP] + L-alanine + H(+) = (8S)-8-amino-7-oxononanoate + holo-[ACP] + CO2</text>
        <dbReference type="Rhea" id="RHEA:42288"/>
        <dbReference type="Rhea" id="RHEA-COMP:9685"/>
        <dbReference type="Rhea" id="RHEA-COMP:9955"/>
        <dbReference type="ChEBI" id="CHEBI:15378"/>
        <dbReference type="ChEBI" id="CHEBI:16526"/>
        <dbReference type="ChEBI" id="CHEBI:57972"/>
        <dbReference type="ChEBI" id="CHEBI:64479"/>
        <dbReference type="ChEBI" id="CHEBI:78846"/>
        <dbReference type="ChEBI" id="CHEBI:149468"/>
        <dbReference type="EC" id="2.3.1.47"/>
    </reaction>
</comment>
<comment type="cofactor">
    <cofactor evidence="1">
        <name>pyridoxal 5'-phosphate</name>
        <dbReference type="ChEBI" id="CHEBI:597326"/>
    </cofactor>
</comment>
<comment type="pathway">
    <text evidence="1">Cofactor biosynthesis; biotin biosynthesis.</text>
</comment>
<comment type="subunit">
    <text evidence="1">Homodimer.</text>
</comment>
<comment type="similarity">
    <text evidence="1">Belongs to the class-II pyridoxal-phosphate-dependent aminotransferase family. BioF subfamily.</text>
</comment>
<keyword id="KW-0093">Biotin biosynthesis</keyword>
<keyword id="KW-0663">Pyridoxal phosphate</keyword>
<keyword id="KW-0808">Transferase</keyword>
<protein>
    <recommendedName>
        <fullName evidence="1">8-amino-7-oxononanoate synthase</fullName>
        <shortName evidence="1">AONS</shortName>
        <ecNumber evidence="1">2.3.1.47</ecNumber>
    </recommendedName>
    <alternativeName>
        <fullName evidence="1">7-keto-8-amino-pelargonic acid synthase</fullName>
        <shortName evidence="1">7-KAP synthase</shortName>
        <shortName evidence="1">KAPA synthase</shortName>
    </alternativeName>
    <alternativeName>
        <fullName evidence="1">8-amino-7-ketopelargonate synthase</fullName>
    </alternativeName>
</protein>
<proteinExistence type="inferred from homology"/>
<name>BIOF_BURVG</name>
<sequence>MKPGAPPIATPLLDTLQRGLAELDAQGLRRVRRTADTACDAHMRVDGRDIVGFASNDYLGLAAHPALVAAFAEGAQRYGSGSGGSHLLGGHSRAHARLEDELAGFAGGFSDAPRALYFSTGYMANLAAMTALTGKQATIFSDALNHASLIDGIRLSRANVQIYPHADMHALGALLDASDAPTKLIVSDTVFSMDGDLAPLAELVALAERHGAWLVVDDAHGFGVLGPQGRGALAAAALRSPNLVYVGTLGKAAGVAGAFVVAHETAIEWMIQRARSYIFTTAAPPAVAHAVSASLKVIGGDEGDARRAHLAALIERTRALLRATRWQPVDSHTAVQPLVIGSNDATLAAMRALDARGLWVPAIRPPTVPAGTSRLRISLSAAHSFDDLARLEAALIAASEASA</sequence>
<evidence type="ECO:0000255" key="1">
    <source>
        <dbReference type="HAMAP-Rule" id="MF_01693"/>
    </source>
</evidence>